<organism>
    <name type="scientific">Synechococcus sp. (strain CC9605)</name>
    <dbReference type="NCBI Taxonomy" id="110662"/>
    <lineage>
        <taxon>Bacteria</taxon>
        <taxon>Bacillati</taxon>
        <taxon>Cyanobacteriota</taxon>
        <taxon>Cyanophyceae</taxon>
        <taxon>Synechococcales</taxon>
        <taxon>Synechococcaceae</taxon>
        <taxon>Synechococcus</taxon>
    </lineage>
</organism>
<sequence length="129" mass="13631">MAFAFPDSFRFADSHEYANADGELVRVGISAFAVDQLGDIVFVDLPDVGASLAKGTSFGSVESVKAVEDMYAPIAGEVVQRNEAVLASPEELQNDPHGEGWLLVLRPSDPAELDSLMTAEAYGAKVNAG</sequence>
<accession>Q3AGL5</accession>
<feature type="chain" id="PRO_0000302449" description="Glycine cleavage system H protein">
    <location>
        <begin position="1"/>
        <end position="129"/>
    </location>
</feature>
<feature type="domain" description="Lipoyl-binding" evidence="2">
    <location>
        <begin position="24"/>
        <end position="106"/>
    </location>
</feature>
<feature type="modified residue" description="N6-lipoyllysine" evidence="1">
    <location>
        <position position="65"/>
    </location>
</feature>
<proteinExistence type="inferred from homology"/>
<protein>
    <recommendedName>
        <fullName evidence="1">Glycine cleavage system H protein</fullName>
    </recommendedName>
</protein>
<comment type="function">
    <text evidence="1">The glycine cleavage system catalyzes the degradation of glycine. The H protein shuttles the methylamine group of glycine from the P protein to the T protein.</text>
</comment>
<comment type="cofactor">
    <cofactor evidence="1">
        <name>(R)-lipoate</name>
        <dbReference type="ChEBI" id="CHEBI:83088"/>
    </cofactor>
    <text evidence="1">Binds 1 lipoyl cofactor covalently.</text>
</comment>
<comment type="subunit">
    <text evidence="1">The glycine cleavage system is composed of four proteins: P, T, L and H.</text>
</comment>
<comment type="similarity">
    <text evidence="1">Belongs to the GcvH family.</text>
</comment>
<evidence type="ECO:0000255" key="1">
    <source>
        <dbReference type="HAMAP-Rule" id="MF_00272"/>
    </source>
</evidence>
<evidence type="ECO:0000255" key="2">
    <source>
        <dbReference type="PROSITE-ProRule" id="PRU01066"/>
    </source>
</evidence>
<gene>
    <name evidence="1" type="primary">gcvH</name>
    <name type="ordered locus">Syncc9605_2539</name>
</gene>
<name>GCSH_SYNSC</name>
<keyword id="KW-0450">Lipoyl</keyword>
<dbReference type="EMBL" id="CP000110">
    <property type="protein sequence ID" value="ABB36267.1"/>
    <property type="molecule type" value="Genomic_DNA"/>
</dbReference>
<dbReference type="RefSeq" id="WP_011365462.1">
    <property type="nucleotide sequence ID" value="NC_007516.1"/>
</dbReference>
<dbReference type="SMR" id="Q3AGL5"/>
<dbReference type="STRING" id="110662.Syncc9605_2539"/>
<dbReference type="KEGG" id="syd:Syncc9605_2539"/>
<dbReference type="eggNOG" id="COG0509">
    <property type="taxonomic scope" value="Bacteria"/>
</dbReference>
<dbReference type="HOGENOM" id="CLU_097408_2_0_3"/>
<dbReference type="OrthoDB" id="9796712at2"/>
<dbReference type="GO" id="GO:0005829">
    <property type="term" value="C:cytosol"/>
    <property type="evidence" value="ECO:0007669"/>
    <property type="project" value="TreeGrafter"/>
</dbReference>
<dbReference type="GO" id="GO:0005960">
    <property type="term" value="C:glycine cleavage complex"/>
    <property type="evidence" value="ECO:0007669"/>
    <property type="project" value="InterPro"/>
</dbReference>
<dbReference type="GO" id="GO:0019464">
    <property type="term" value="P:glycine decarboxylation via glycine cleavage system"/>
    <property type="evidence" value="ECO:0007669"/>
    <property type="project" value="UniProtKB-UniRule"/>
</dbReference>
<dbReference type="CDD" id="cd06848">
    <property type="entry name" value="GCS_H"/>
    <property type="match status" value="1"/>
</dbReference>
<dbReference type="Gene3D" id="2.40.50.100">
    <property type="match status" value="1"/>
</dbReference>
<dbReference type="HAMAP" id="MF_00272">
    <property type="entry name" value="GcvH"/>
    <property type="match status" value="1"/>
</dbReference>
<dbReference type="InterPro" id="IPR003016">
    <property type="entry name" value="2-oxoA_DH_lipoyl-BS"/>
</dbReference>
<dbReference type="InterPro" id="IPR000089">
    <property type="entry name" value="Biotin_lipoyl"/>
</dbReference>
<dbReference type="InterPro" id="IPR002930">
    <property type="entry name" value="GCV_H"/>
</dbReference>
<dbReference type="InterPro" id="IPR033753">
    <property type="entry name" value="GCV_H/Fam206"/>
</dbReference>
<dbReference type="InterPro" id="IPR017453">
    <property type="entry name" value="GCV_H_sub"/>
</dbReference>
<dbReference type="InterPro" id="IPR011053">
    <property type="entry name" value="Single_hybrid_motif"/>
</dbReference>
<dbReference type="NCBIfam" id="TIGR00527">
    <property type="entry name" value="gcvH"/>
    <property type="match status" value="1"/>
</dbReference>
<dbReference type="NCBIfam" id="NF002270">
    <property type="entry name" value="PRK01202.1"/>
    <property type="match status" value="1"/>
</dbReference>
<dbReference type="PANTHER" id="PTHR11715">
    <property type="entry name" value="GLYCINE CLEAVAGE SYSTEM H PROTEIN"/>
    <property type="match status" value="1"/>
</dbReference>
<dbReference type="PANTHER" id="PTHR11715:SF3">
    <property type="entry name" value="GLYCINE CLEAVAGE SYSTEM H PROTEIN-RELATED"/>
    <property type="match status" value="1"/>
</dbReference>
<dbReference type="Pfam" id="PF01597">
    <property type="entry name" value="GCV_H"/>
    <property type="match status" value="1"/>
</dbReference>
<dbReference type="SUPFAM" id="SSF51230">
    <property type="entry name" value="Single hybrid motif"/>
    <property type="match status" value="1"/>
</dbReference>
<dbReference type="PROSITE" id="PS50968">
    <property type="entry name" value="BIOTINYL_LIPOYL"/>
    <property type="match status" value="1"/>
</dbReference>
<dbReference type="PROSITE" id="PS00189">
    <property type="entry name" value="LIPOYL"/>
    <property type="match status" value="1"/>
</dbReference>
<reference key="1">
    <citation type="submission" date="2005-07" db="EMBL/GenBank/DDBJ databases">
        <title>Complete sequence of Synechococcus sp. CC9605.</title>
        <authorList>
            <consortium name="US DOE Joint Genome Institute"/>
            <person name="Copeland A."/>
            <person name="Lucas S."/>
            <person name="Lapidus A."/>
            <person name="Barry K."/>
            <person name="Detter J.C."/>
            <person name="Glavina T."/>
            <person name="Hammon N."/>
            <person name="Israni S."/>
            <person name="Pitluck S."/>
            <person name="Schmutz J."/>
            <person name="Martinez M."/>
            <person name="Larimer F."/>
            <person name="Land M."/>
            <person name="Kyrpides N."/>
            <person name="Ivanova N."/>
            <person name="Richardson P."/>
        </authorList>
    </citation>
    <scope>NUCLEOTIDE SEQUENCE [LARGE SCALE GENOMIC DNA]</scope>
    <source>
        <strain>CC9605</strain>
    </source>
</reference>